<accession>P08161</accession>
<organismHost>
    <name type="scientific">Lepidoptera</name>
    <name type="common">butterflies and moths</name>
    <dbReference type="NCBI Taxonomy" id="7088"/>
</organismHost>
<protein>
    <recommendedName>
        <fullName>Early 94 kDa protein</fullName>
    </recommendedName>
</protein>
<feature type="chain" id="PRO_0000132863" description="Early 94 kDa protein">
    <location>
        <begin position="1"/>
        <end position="803"/>
    </location>
</feature>
<feature type="sequence conflict" description="In Ref. 1; AAA46702." evidence="1" ref="1">
    <original>E</original>
    <variation>K</variation>
    <location>
        <position position="457"/>
    </location>
</feature>
<reference key="1">
    <citation type="journal article" date="1987" name="J. Virol.">
        <title>Divergent transcription of early 35- and 94-kilodalton protein genes encoded by the HindIII K genome fragment of the baculovirus Autographa californica nuclear polyhedrosis virus.</title>
        <authorList>
            <person name="Friesen P.D."/>
            <person name="Miller L.K."/>
        </authorList>
    </citation>
    <scope>NUCLEOTIDE SEQUENCE [GENOMIC DNA]</scope>
    <source>
        <strain>L1</strain>
    </source>
</reference>
<reference key="2">
    <citation type="journal article" date="1994" name="Virology">
        <title>The complete DNA sequence of Autographa californica nuclear polyhedrosis virus.</title>
        <authorList>
            <person name="Ayres M.D."/>
            <person name="Howard S.C."/>
            <person name="Kuzio J."/>
            <person name="Lopez-Ferber M."/>
            <person name="Possee R.D."/>
        </authorList>
    </citation>
    <scope>NUCLEOTIDE SEQUENCE [LARGE SCALE GENOMIC DNA]</scope>
    <source>
        <strain>C6</strain>
    </source>
</reference>
<keyword id="KW-0244">Early protein</keyword>
<keyword id="KW-1185">Reference proteome</keyword>
<organism>
    <name type="scientific">Autographa californica nuclear polyhedrosis virus</name>
    <name type="common">AcMNPV</name>
    <dbReference type="NCBI Taxonomy" id="46015"/>
    <lineage>
        <taxon>Viruses</taxon>
        <taxon>Viruses incertae sedis</taxon>
        <taxon>Naldaviricetes</taxon>
        <taxon>Lefavirales</taxon>
        <taxon>Baculoviridae</taxon>
        <taxon>Alphabaculovirus</taxon>
        <taxon>Alphabaculovirus aucalifornicae</taxon>
    </lineage>
</organism>
<proteinExistence type="predicted"/>
<name>VE94_NPVAC</name>
<sequence>MINYYVYATDDSLSTNSDYYFNKNALQTLEQFQNEIENISSCDKVLYLHWSAYCRQKEIGDVKSRYLRRNGEGTDTRPSEFIKWIHKNINLLDGKLKLLYMVTDGQISKNEANVCKNLLNEKPFSFERIVFYAINNNTEQIDLSVASAFVNNSDCKIYRNDEMVEWVNLTKEFNYDIITTENFISKKDELLSFVRFKFINSMPTDANVLNEVDKLKRLRQRLFSEIKQTNNSSMNFDQIKNKNEFVNTFKSTEFYKTLYNADVLNFDKIIDSTISTAINYLHNRNKSYAFDVMKNLHYQNKLASVNAETDDVVANDDDEAYDYSNVENIRFPDCILANDSGVPAILLTHYNLFETIQGSLTKFKSRLEFPLLWSQNKEIKNSIEYCYNLESLKQLIQHGTRLSPRSRRPFTGAIVPNEQFDEYNDYVLACTYFDAKKVAFNAGLMYYLLYKHINDAEYIDDNVKDYFKRYVIYRINNTECMIGFSNLAMEPLIKVKLPTALWYVSEISTLLFKHDNQHFGKEKLRQFAHFAEDMLQILQWCDYTDVNVEAVKKRAYCLKRINMFKRMSVLDAVEWIANRAFECKDKFIINKLTNADALQDLKFLKVNHNGVVDEHVLNDTSINAERYLYFYHIIEDFDKYISVVDNTMRPAFVLEEGKTFYDSLLKQLQSVHFNGQEITFEKCSRLDFNRILSLHKLYIECVKSLNKYPTLEEYQNYVYNQKHVKFNRIAIFPENILQNLAAVHNEYANKIVNLPVEEFIVRANNTVNRITRIQNERVGSPLQAEEIDKLIKLSEQRVNICRK</sequence>
<evidence type="ECO:0000305" key="1"/>
<dbReference type="EMBL" id="M16821">
    <property type="protein sequence ID" value="AAA46702.1"/>
    <property type="molecule type" value="Genomic_DNA"/>
</dbReference>
<dbReference type="EMBL" id="L22858">
    <property type="protein sequence ID" value="AAA66764.1"/>
    <property type="molecule type" value="Genomic_DNA"/>
</dbReference>
<dbReference type="PIR" id="B27840">
    <property type="entry name" value="WMNV94"/>
</dbReference>
<dbReference type="PIR" id="G72866">
    <property type="entry name" value="G72866"/>
</dbReference>
<dbReference type="RefSeq" id="NP_054164.1">
    <property type="nucleotide sequence ID" value="NC_001623.1"/>
</dbReference>
<dbReference type="GeneID" id="1403967"/>
<dbReference type="KEGG" id="vg:1403967"/>
<dbReference type="OrthoDB" id="1889at10239"/>
<dbReference type="Proteomes" id="UP000008292">
    <property type="component" value="Segment"/>
</dbReference>